<feature type="chain" id="PRO_0000296768" description="Probable potassium transport system protein Kup">
    <location>
        <begin position="1"/>
        <end position="628"/>
    </location>
</feature>
<feature type="transmembrane region" description="Helical" evidence="1">
    <location>
        <begin position="56"/>
        <end position="76"/>
    </location>
</feature>
<feature type="transmembrane region" description="Helical" evidence="1">
    <location>
        <begin position="109"/>
        <end position="129"/>
    </location>
</feature>
<feature type="transmembrane region" description="Helical" evidence="1">
    <location>
        <begin position="141"/>
        <end position="161"/>
    </location>
</feature>
<feature type="transmembrane region" description="Helical" evidence="1">
    <location>
        <begin position="174"/>
        <end position="194"/>
    </location>
</feature>
<feature type="transmembrane region" description="Helical" evidence="1">
    <location>
        <begin position="209"/>
        <end position="229"/>
    </location>
</feature>
<feature type="transmembrane region" description="Helical" evidence="1">
    <location>
        <begin position="253"/>
        <end position="273"/>
    </location>
</feature>
<feature type="transmembrane region" description="Helical" evidence="1">
    <location>
        <begin position="295"/>
        <end position="315"/>
    </location>
</feature>
<feature type="transmembrane region" description="Helical" evidence="1">
    <location>
        <begin position="343"/>
        <end position="363"/>
    </location>
</feature>
<feature type="transmembrane region" description="Helical" evidence="1">
    <location>
        <begin position="372"/>
        <end position="392"/>
    </location>
</feature>
<feature type="transmembrane region" description="Helical" evidence="1">
    <location>
        <begin position="400"/>
        <end position="420"/>
    </location>
</feature>
<feature type="transmembrane region" description="Helical" evidence="1">
    <location>
        <begin position="425"/>
        <end position="445"/>
    </location>
</feature>
<comment type="function">
    <text evidence="1">Transport of potassium into the cell. Likely operates as a K(+):H(+) symporter.</text>
</comment>
<comment type="catalytic activity">
    <reaction evidence="1">
        <text>K(+)(in) + H(+)(in) = K(+)(out) + H(+)(out)</text>
        <dbReference type="Rhea" id="RHEA:28490"/>
        <dbReference type="ChEBI" id="CHEBI:15378"/>
        <dbReference type="ChEBI" id="CHEBI:29103"/>
    </reaction>
    <physiologicalReaction direction="right-to-left" evidence="1">
        <dbReference type="Rhea" id="RHEA:28492"/>
    </physiologicalReaction>
</comment>
<comment type="subcellular location">
    <subcellularLocation>
        <location evidence="1">Cell inner membrane</location>
        <topology evidence="1">Multi-pass membrane protein</topology>
    </subcellularLocation>
</comment>
<comment type="similarity">
    <text evidence="1">Belongs to the HAK/KUP transporter (TC 2.A.72) family.</text>
</comment>
<proteinExistence type="inferred from homology"/>
<reference key="1">
    <citation type="journal article" date="2007" name="J. Bacteriol.">
        <title>Whole-genome analysis of the methyl tert-butyl ether-degrading beta-proteobacterium Methylibium petroleiphilum PM1.</title>
        <authorList>
            <person name="Kane S.R."/>
            <person name="Chakicherla A.Y."/>
            <person name="Chain P.S.G."/>
            <person name="Schmidt R."/>
            <person name="Shin M.W."/>
            <person name="Legler T.C."/>
            <person name="Scow K.M."/>
            <person name="Larimer F.W."/>
            <person name="Lucas S.M."/>
            <person name="Richardson P.M."/>
            <person name="Hristova K.R."/>
        </authorList>
    </citation>
    <scope>NUCLEOTIDE SEQUENCE [LARGE SCALE GENOMIC DNA]</scope>
    <source>
        <strain>ATCC BAA-1232 / LMG 22953 / PM1</strain>
    </source>
</reference>
<accession>A2SC47</accession>
<keyword id="KW-0997">Cell inner membrane</keyword>
<keyword id="KW-1003">Cell membrane</keyword>
<keyword id="KW-0406">Ion transport</keyword>
<keyword id="KW-0472">Membrane</keyword>
<keyword id="KW-0630">Potassium</keyword>
<keyword id="KW-0633">Potassium transport</keyword>
<keyword id="KW-1185">Reference proteome</keyword>
<keyword id="KW-0769">Symport</keyword>
<keyword id="KW-0812">Transmembrane</keyword>
<keyword id="KW-1133">Transmembrane helix</keyword>
<keyword id="KW-0813">Transport</keyword>
<protein>
    <recommendedName>
        <fullName evidence="1">Probable potassium transport system protein Kup</fullName>
    </recommendedName>
</protein>
<name>KUP_METPP</name>
<sequence length="628" mass="68688">MHSRSSDPPTGSKLAALTLGAVGVVYGDIGTSPLYALKEVFAHGRIDITPDNIYGILSLVVWTLTVIVSLKYVLLILRADNNGEGGLIAMLALASTAVKERPVLRRRLLILGVFGTAIFFGDGVITPAISVLSAVEGLEVAAPGLHRYVVPVTLVVLTLLFAAQRFGTGGIGKFFGPVTAVWFIVLALLGVVHIVENPAVLAALSPHYALAFMWQHPGTAFVSLGAVVLCVTGAEALYADMGHFGKRPIRLAWFSLVMPALMINYFGQGAMLLQRPETVKNPFYEMAPEWALYPLIVLATLATVIASQALITAAFSVTKQAIQLGYFPRLRVTHTSVKETGQIYVPFVNWGLYACIVLAVVTFGSSSKLASAYGIAVTTDMLITTTMTFFVIRYSWKYPWALCVAATGFFFLVDAMFFAANAIKILDGGWFPLAIGAAMFTLMMTWKQGRRLMSERLREEAIDLKSFLESVFISPPTRVQGTAVFLAAEQGSTPNALLHNLKHNKVLHEQNLFVTVRHHEVPWIPFSKRCEIESLGHCCWQVTLNFGFKNEPDVPEALALLRGRGVQLDDMETSYFLSRDIVIPTIGKGMAIWREKLFCSMHRNAAAAADFLNLPTNRVVELGSKVEI</sequence>
<dbReference type="EMBL" id="CP000555">
    <property type="protein sequence ID" value="ABM93136.1"/>
    <property type="molecule type" value="Genomic_DNA"/>
</dbReference>
<dbReference type="RefSeq" id="WP_011827775.1">
    <property type="nucleotide sequence ID" value="NC_008825.1"/>
</dbReference>
<dbReference type="SMR" id="A2SC47"/>
<dbReference type="STRING" id="420662.Mpe_A0174"/>
<dbReference type="KEGG" id="mpt:Mpe_A0174"/>
<dbReference type="eggNOG" id="COG3158">
    <property type="taxonomic scope" value="Bacteria"/>
</dbReference>
<dbReference type="HOGENOM" id="CLU_008142_4_2_4"/>
<dbReference type="Proteomes" id="UP000000366">
    <property type="component" value="Chromosome"/>
</dbReference>
<dbReference type="GO" id="GO:0005886">
    <property type="term" value="C:plasma membrane"/>
    <property type="evidence" value="ECO:0007669"/>
    <property type="project" value="UniProtKB-SubCell"/>
</dbReference>
<dbReference type="GO" id="GO:0015079">
    <property type="term" value="F:potassium ion transmembrane transporter activity"/>
    <property type="evidence" value="ECO:0007669"/>
    <property type="project" value="UniProtKB-UniRule"/>
</dbReference>
<dbReference type="GO" id="GO:0015293">
    <property type="term" value="F:symporter activity"/>
    <property type="evidence" value="ECO:0007669"/>
    <property type="project" value="UniProtKB-UniRule"/>
</dbReference>
<dbReference type="HAMAP" id="MF_01522">
    <property type="entry name" value="Kup"/>
    <property type="match status" value="1"/>
</dbReference>
<dbReference type="InterPro" id="IPR003855">
    <property type="entry name" value="K+_transporter"/>
</dbReference>
<dbReference type="InterPro" id="IPR053952">
    <property type="entry name" value="K_trans_C"/>
</dbReference>
<dbReference type="InterPro" id="IPR053951">
    <property type="entry name" value="K_trans_N"/>
</dbReference>
<dbReference type="InterPro" id="IPR023051">
    <property type="entry name" value="Kup"/>
</dbReference>
<dbReference type="PANTHER" id="PTHR30540:SF79">
    <property type="entry name" value="LOW AFFINITY POTASSIUM TRANSPORT SYSTEM PROTEIN KUP"/>
    <property type="match status" value="1"/>
</dbReference>
<dbReference type="PANTHER" id="PTHR30540">
    <property type="entry name" value="OSMOTIC STRESS POTASSIUM TRANSPORTER"/>
    <property type="match status" value="1"/>
</dbReference>
<dbReference type="Pfam" id="PF02705">
    <property type="entry name" value="K_trans"/>
    <property type="match status" value="1"/>
</dbReference>
<dbReference type="Pfam" id="PF22776">
    <property type="entry name" value="K_trans_C"/>
    <property type="match status" value="1"/>
</dbReference>
<evidence type="ECO:0000255" key="1">
    <source>
        <dbReference type="HAMAP-Rule" id="MF_01522"/>
    </source>
</evidence>
<gene>
    <name evidence="1" type="primary">kup</name>
    <name type="ordered locus">Mpe_A0174</name>
</gene>
<organism>
    <name type="scientific">Methylibium petroleiphilum (strain ATCC BAA-1232 / LMG 22953 / PM1)</name>
    <dbReference type="NCBI Taxonomy" id="420662"/>
    <lineage>
        <taxon>Bacteria</taxon>
        <taxon>Pseudomonadati</taxon>
        <taxon>Pseudomonadota</taxon>
        <taxon>Betaproteobacteria</taxon>
        <taxon>Burkholderiales</taxon>
        <taxon>Sphaerotilaceae</taxon>
        <taxon>Methylibium</taxon>
    </lineage>
</organism>